<evidence type="ECO:0000250" key="1"/>
<evidence type="ECO:0000250" key="2">
    <source>
        <dbReference type="UniProtKB" id="P14779"/>
    </source>
</evidence>
<evidence type="ECO:0000255" key="3">
    <source>
        <dbReference type="PROSITE-ProRule" id="PRU00088"/>
    </source>
</evidence>
<evidence type="ECO:0000255" key="4">
    <source>
        <dbReference type="PROSITE-ProRule" id="PRU00716"/>
    </source>
</evidence>
<evidence type="ECO:0000256" key="5">
    <source>
        <dbReference type="SAM" id="MobiDB-lite"/>
    </source>
</evidence>
<evidence type="ECO:0000269" key="6">
    <source>
    </source>
</evidence>
<evidence type="ECO:0000269" key="7">
    <source>
    </source>
</evidence>
<evidence type="ECO:0000269" key="8">
    <source>
    </source>
</evidence>
<evidence type="ECO:0000269" key="9">
    <source>
    </source>
</evidence>
<evidence type="ECO:0000269" key="10">
    <source>
    </source>
</evidence>
<evidence type="ECO:0000303" key="11">
    <source>
    </source>
</evidence>
<evidence type="ECO:0000303" key="12">
    <source>
    </source>
</evidence>
<evidence type="ECO:0000305" key="13"/>
<evidence type="ECO:0000305" key="14">
    <source>
    </source>
</evidence>
<evidence type="ECO:0000312" key="15">
    <source>
        <dbReference type="EMBL" id="CAB14658.1"/>
    </source>
</evidence>
<keyword id="KW-0963">Cytoplasm</keyword>
<keyword id="KW-0249">Electron transport</keyword>
<keyword id="KW-0274">FAD</keyword>
<keyword id="KW-0285">Flavoprotein</keyword>
<keyword id="KW-0288">FMN</keyword>
<keyword id="KW-0349">Heme</keyword>
<keyword id="KW-0408">Iron</keyword>
<keyword id="KW-0479">Metal-binding</keyword>
<keyword id="KW-0503">Monooxygenase</keyword>
<keyword id="KW-0511">Multifunctional enzyme</keyword>
<keyword id="KW-0521">NADP</keyword>
<keyword id="KW-0560">Oxidoreductase</keyword>
<keyword id="KW-1185">Reference proteome</keyword>
<keyword id="KW-0813">Transport</keyword>
<organism>
    <name type="scientific">Bacillus subtilis (strain 168)</name>
    <dbReference type="NCBI Taxonomy" id="224308"/>
    <lineage>
        <taxon>Bacteria</taxon>
        <taxon>Bacillati</taxon>
        <taxon>Bacillota</taxon>
        <taxon>Bacilli</taxon>
        <taxon>Bacillales</taxon>
        <taxon>Bacillaceae</taxon>
        <taxon>Bacillus</taxon>
    </lineage>
</organism>
<gene>
    <name evidence="15" type="primary">cypB</name>
    <name evidence="11 12" type="synonym">cyp102A3</name>
    <name evidence="11 12" type="synonym">yrhJ</name>
    <name type="ordered locus">BSU27160</name>
</gene>
<name>CYPB_BACSU</name>
<accession>O08336</accession>
<comment type="function">
    <text evidence="8 9">Functions as a fatty acid monooxygenase. Catalyzes hydroxylation of a range of medium to long-chain fatty acids, with a preference for long-chain unsaturated and branched-chain fatty acids over saturated fatty acids. Hydroxylation of myristic acid occurs mainly at the omega-2 and omega-3 positions, in approximately equal proportions. Also displays a NADPH-dependent reductase activity in the C-terminal domain, which allows electron transfer from NADPH to the heme iron of the cytochrome P450 N-terminal domain.</text>
</comment>
<comment type="catalytic activity">
    <reaction evidence="8 9">
        <text>an organic molecule + reduced [NADPH--hemoprotein reductase] + O2 = an alcohol + oxidized [NADPH--hemoprotein reductase] + H2O + H(+)</text>
        <dbReference type="Rhea" id="RHEA:17149"/>
        <dbReference type="Rhea" id="RHEA-COMP:11964"/>
        <dbReference type="Rhea" id="RHEA-COMP:11965"/>
        <dbReference type="ChEBI" id="CHEBI:15377"/>
        <dbReference type="ChEBI" id="CHEBI:15378"/>
        <dbReference type="ChEBI" id="CHEBI:15379"/>
        <dbReference type="ChEBI" id="CHEBI:30879"/>
        <dbReference type="ChEBI" id="CHEBI:57618"/>
        <dbReference type="ChEBI" id="CHEBI:58210"/>
        <dbReference type="ChEBI" id="CHEBI:142491"/>
        <dbReference type="EC" id="1.14.14.1"/>
    </reaction>
</comment>
<comment type="catalytic activity">
    <reaction evidence="8 9">
        <text>2 oxidized [cytochrome P450] + NADPH = 2 reduced [cytochrome P450] + NADP(+) + H(+)</text>
        <dbReference type="Rhea" id="RHEA:24040"/>
        <dbReference type="Rhea" id="RHEA-COMP:14627"/>
        <dbReference type="Rhea" id="RHEA-COMP:14628"/>
        <dbReference type="ChEBI" id="CHEBI:15378"/>
        <dbReference type="ChEBI" id="CHEBI:55376"/>
        <dbReference type="ChEBI" id="CHEBI:57783"/>
        <dbReference type="ChEBI" id="CHEBI:58349"/>
        <dbReference type="ChEBI" id="CHEBI:60344"/>
        <dbReference type="EC" id="1.6.2.4"/>
    </reaction>
</comment>
<comment type="cofactor">
    <cofactor evidence="9">
        <name>FAD</name>
        <dbReference type="ChEBI" id="CHEBI:57692"/>
    </cofactor>
</comment>
<comment type="cofactor">
    <cofactor evidence="9">
        <name>FMN</name>
        <dbReference type="ChEBI" id="CHEBI:58210"/>
    </cofactor>
</comment>
<comment type="cofactor">
    <cofactor evidence="9">
        <name>heme b</name>
        <dbReference type="ChEBI" id="CHEBI:60344"/>
    </cofactor>
</comment>
<comment type="biophysicochemical properties">
    <kinetics>
        <KM evidence="9">165 uM for lauric acid</KM>
        <KM evidence="9">542 uM for myristic acid</KM>
        <KM evidence="9">337 uM for palmitic acid</KM>
        <KM evidence="9">68.5 uM for stearic acid</KM>
        <KM evidence="9">28.7 uM for phytanic acid</KM>
        <KM evidence="9">68.3 uM for 15-methylpalmitic acid</KM>
        <KM evidence="9">79 uM for arachidonic acid</KM>
        <KM evidence="9">5.1 uM for NADPH</KM>
        <KM evidence="9">2.43 mM for NADH</KM>
        <KM evidence="9">10.9 uM for cytochrome c (in the reductase assay)</KM>
        <KM evidence="9">285 uM for ferricyanide (in the reductase assay)</KM>
        <text evidence="9">kcat is 104 min(-1) for lauric acid hydroxylation. kcat is 5556 min(-1) for myristic acid hydroxylation. kcat is 676 min(-1) for palmitic acid hydroxylation. kcat is 374 min(-1) for stearic acid hydroxylation. kcat is 794 min(-1) for phytanic acid hydroxylation. kcat is 3845 min(-1) for 15-methylpalmitic acid hydroxylation. kcat is 1690 min(-1) for arachidonic acid hydroxylation. kcat is 3520 min(-1) for the reduction of cytochrome c. kcat is 37050 min(-1) for the reduction of ferricyanide.</text>
    </kinetics>
</comment>
<comment type="subcellular location">
    <subcellularLocation>
        <location evidence="1">Cytoplasm</location>
    </subcellularLocation>
</comment>
<comment type="induction">
    <text evidence="6 7 10">Negatively regulated by the transcriptional repressor FatR (PubMed:11574077, PubMed:11734890). Is induced by fatty acids such as oleate, linoleate and phytanate, that bind and displace the FatR repressor (PubMed:11734890). Is also induced by palmitate, likely via another mechanism (PubMed:11574077). Transcribed under partial control of SigM ECF sigma factor (PubMed:17434969).</text>
</comment>
<comment type="similarity">
    <text evidence="13">In the N-terminal section; belongs to the cytochrome P450 family.</text>
</comment>
<sequence length="1054" mass="118676">MKQASAIPQPKTYGPLKNLPHLEKEQLSQSLWRIADELGPIFRFDFPGVSSVFVSGHNLVAEVCDEKRFDKNLGKGLQKVREFGGDGLFTSWTHEPNWQKAHRILLPSFSQKAMKGYHSMMLDIATQLIQKWSRLNPNEEIDVADDMTRLTLDTIGLCGFNYRFNSFYRDSQHPFITSMLRALKEAMNQSKRLGLQDKMMVKTKLQFQKDIEVMNSLVDRMIAERKANPDENIKDLLSLMLYAKDPVTGETLDDENIRYQIITFLIAGHETTSGLLSFAIYCLLTHPEKLKKAQEEADRVLTDDTPEYKQIQQLKYIRMVLNETLRLYPTAPAFSLYAKEDTVLGGEYPISKGQPVTVLIPKLHRDQNAWGPDAEDFRPERFEDPSSIPHHAYKPFGNGQRACIGMQFALQEATMVLGLVLKHFELINHTGYELKIKEALTIKPDDFKITVKPRKTAAINVQRKEQADIKAETKPKETKPKHGTPLLVLFGSNLGTAEGIAGELAAQGRQMGFTAETAPLDDYIGKLPEEGAVVIVTASYNGAPPDNAAGFVEWLKELEEGQLKGVSYAVFGCGNRSWASTYQRIPRLIDDMMKAKGASRLTAIGEGDAADDFESHRESWENRFWKETMDAFDINEIAQKEDRPSLSITFLSEATETPVAKAYGAFEGIVLENRELQTAASTRSTRHIELEIPAGKTYKEGDHIGILPKNSRELVQRVLSRFGLQSNHVIKVSGSAHMAHLPMDRPIKVVDLLSSYVELQEPASRLQLRELASYTVCPPHQKELEQLVSDDGIYKEQVLAKRLTMLDFLEDYPACEMPFERFLALLPSLKPRYYSISSSPKVHANIVSMTVGVVKASAWSGRGEYRGVASNYLAELNTGDAAACFIRTPQSGFQMPNDPETPMIMVGPGTGIAPFRGFIQARSVLKKEGSTLGEALLYFGCRRPDHDDLYREELDQAEQDGLVTIRRCYSRVENEPKGYVQHLLKQDTQKLMTLIEKGAHIYVCGDGSQMAPDVERTLRLAYEAEKAASQEESAVWLQKLQDQRRYVKDVWTGM</sequence>
<reference key="1">
    <citation type="journal article" date="1997" name="Microbiology">
        <title>Sequence of the Bacillus subtilis genome region in the vicinity of the lev operon reveals two new extracytoplasmic function RNA polymerase sigma factors SigV and SigZ.</title>
        <authorList>
            <person name="Sorokin A."/>
            <person name="Bolotin A."/>
            <person name="Purnelle B."/>
            <person name="Hilbert H."/>
            <person name="Lauber J."/>
            <person name="Duesterhoeft A."/>
            <person name="Ehrlich S.D."/>
        </authorList>
    </citation>
    <scope>NUCLEOTIDE SEQUENCE [GENOMIC DNA]</scope>
    <source>
        <strain>168</strain>
    </source>
</reference>
<reference key="2">
    <citation type="journal article" date="1997" name="Nature">
        <title>The complete genome sequence of the Gram-positive bacterium Bacillus subtilis.</title>
        <authorList>
            <person name="Kunst F."/>
            <person name="Ogasawara N."/>
            <person name="Moszer I."/>
            <person name="Albertini A.M."/>
            <person name="Alloni G."/>
            <person name="Azevedo V."/>
            <person name="Bertero M.G."/>
            <person name="Bessieres P."/>
            <person name="Bolotin A."/>
            <person name="Borchert S."/>
            <person name="Borriss R."/>
            <person name="Boursier L."/>
            <person name="Brans A."/>
            <person name="Braun M."/>
            <person name="Brignell S.C."/>
            <person name="Bron S."/>
            <person name="Brouillet S."/>
            <person name="Bruschi C.V."/>
            <person name="Caldwell B."/>
            <person name="Capuano V."/>
            <person name="Carter N.M."/>
            <person name="Choi S.-K."/>
            <person name="Codani J.-J."/>
            <person name="Connerton I.F."/>
            <person name="Cummings N.J."/>
            <person name="Daniel R.A."/>
            <person name="Denizot F."/>
            <person name="Devine K.M."/>
            <person name="Duesterhoeft A."/>
            <person name="Ehrlich S.D."/>
            <person name="Emmerson P.T."/>
            <person name="Entian K.-D."/>
            <person name="Errington J."/>
            <person name="Fabret C."/>
            <person name="Ferrari E."/>
            <person name="Foulger D."/>
            <person name="Fritz C."/>
            <person name="Fujita M."/>
            <person name="Fujita Y."/>
            <person name="Fuma S."/>
            <person name="Galizzi A."/>
            <person name="Galleron N."/>
            <person name="Ghim S.-Y."/>
            <person name="Glaser P."/>
            <person name="Goffeau A."/>
            <person name="Golightly E.J."/>
            <person name="Grandi G."/>
            <person name="Guiseppi G."/>
            <person name="Guy B.J."/>
            <person name="Haga K."/>
            <person name="Haiech J."/>
            <person name="Harwood C.R."/>
            <person name="Henaut A."/>
            <person name="Hilbert H."/>
            <person name="Holsappel S."/>
            <person name="Hosono S."/>
            <person name="Hullo M.-F."/>
            <person name="Itaya M."/>
            <person name="Jones L.-M."/>
            <person name="Joris B."/>
            <person name="Karamata D."/>
            <person name="Kasahara Y."/>
            <person name="Klaerr-Blanchard M."/>
            <person name="Klein C."/>
            <person name="Kobayashi Y."/>
            <person name="Koetter P."/>
            <person name="Koningstein G."/>
            <person name="Krogh S."/>
            <person name="Kumano M."/>
            <person name="Kurita K."/>
            <person name="Lapidus A."/>
            <person name="Lardinois S."/>
            <person name="Lauber J."/>
            <person name="Lazarevic V."/>
            <person name="Lee S.-M."/>
            <person name="Levine A."/>
            <person name="Liu H."/>
            <person name="Masuda S."/>
            <person name="Mauel C."/>
            <person name="Medigue C."/>
            <person name="Medina N."/>
            <person name="Mellado R.P."/>
            <person name="Mizuno M."/>
            <person name="Moestl D."/>
            <person name="Nakai S."/>
            <person name="Noback M."/>
            <person name="Noone D."/>
            <person name="O'Reilly M."/>
            <person name="Ogawa K."/>
            <person name="Ogiwara A."/>
            <person name="Oudega B."/>
            <person name="Park S.-H."/>
            <person name="Parro V."/>
            <person name="Pohl T.M."/>
            <person name="Portetelle D."/>
            <person name="Porwollik S."/>
            <person name="Prescott A.M."/>
            <person name="Presecan E."/>
            <person name="Pujic P."/>
            <person name="Purnelle B."/>
            <person name="Rapoport G."/>
            <person name="Rey M."/>
            <person name="Reynolds S."/>
            <person name="Rieger M."/>
            <person name="Rivolta C."/>
            <person name="Rocha E."/>
            <person name="Roche B."/>
            <person name="Rose M."/>
            <person name="Sadaie Y."/>
            <person name="Sato T."/>
            <person name="Scanlan E."/>
            <person name="Schleich S."/>
            <person name="Schroeter R."/>
            <person name="Scoffone F."/>
            <person name="Sekiguchi J."/>
            <person name="Sekowska A."/>
            <person name="Seror S.J."/>
            <person name="Serror P."/>
            <person name="Shin B.-S."/>
            <person name="Soldo B."/>
            <person name="Sorokin A."/>
            <person name="Tacconi E."/>
            <person name="Takagi T."/>
            <person name="Takahashi H."/>
            <person name="Takemaru K."/>
            <person name="Takeuchi M."/>
            <person name="Tamakoshi A."/>
            <person name="Tanaka T."/>
            <person name="Terpstra P."/>
            <person name="Tognoni A."/>
            <person name="Tosato V."/>
            <person name="Uchiyama S."/>
            <person name="Vandenbol M."/>
            <person name="Vannier F."/>
            <person name="Vassarotti A."/>
            <person name="Viari A."/>
            <person name="Wambutt R."/>
            <person name="Wedler E."/>
            <person name="Wedler H."/>
            <person name="Weitzenegger T."/>
            <person name="Winters P."/>
            <person name="Wipat A."/>
            <person name="Yamamoto H."/>
            <person name="Yamane K."/>
            <person name="Yasumoto K."/>
            <person name="Yata K."/>
            <person name="Yoshida K."/>
            <person name="Yoshikawa H.-F."/>
            <person name="Zumstein E."/>
            <person name="Yoshikawa H."/>
            <person name="Danchin A."/>
        </authorList>
    </citation>
    <scope>NUCLEOTIDE SEQUENCE [LARGE SCALE GENOMIC DNA]</scope>
    <source>
        <strain>168</strain>
    </source>
</reference>
<reference key="3">
    <citation type="journal article" date="2001" name="J. Biochem.">
        <title>Transcriptional regulation of the Bacillus subtilis bscR-CYP102A3 operon by the BscR repressor and differential induction of cytochrome CYP102A3 expression by oleic acid and palmitate.</title>
        <authorList>
            <person name="Lee T.-R."/>
            <person name="Hsu H.-P."/>
            <person name="Shaw G.-C."/>
        </authorList>
    </citation>
    <scope>INDUCTION</scope>
</reference>
<reference key="4">
    <citation type="journal article" date="2001" name="Arch. Microbiol.">
        <title>Fatty-acid-displaced transcriptional repressor, a conserved regulator of cytochrome P450 102 transcription in Bacillus species.</title>
        <authorList>
            <person name="Gustafsson M.C."/>
            <person name="Palmer C.N."/>
            <person name="Wolf C.R."/>
            <person name="von Wachenfeldt C."/>
        </authorList>
    </citation>
    <scope>INDUCTION</scope>
    <source>
        <strain>168 / 1A1</strain>
    </source>
</reference>
<reference key="5">
    <citation type="journal article" date="2004" name="Biochemistry">
        <title>Expression, purification, and characterization of Bacillus subtilis cytochromes P450 CYP102A2 and CYP102A3: flavocytochrome homologues of P450 BM3 from Bacillus megaterium.</title>
        <authorList>
            <person name="Gustafsson M.C."/>
            <person name="Roitel O."/>
            <person name="Marshall K.R."/>
            <person name="Noble M.A."/>
            <person name="Chapman S.K."/>
            <person name="Pessegueiro A."/>
            <person name="Fulco A.J."/>
            <person name="Cheesman M.R."/>
            <person name="von Wachenfeldt C."/>
            <person name="Munro A.W."/>
        </authorList>
    </citation>
    <scope>FUNCTION</scope>
    <scope>CATALYTIC ACTIVITY</scope>
    <scope>COFACTOR</scope>
    <scope>SUBSTRATE SPECIFICITY</scope>
    <scope>BIOPHYSICOCHEMICAL PROPERTIES</scope>
    <source>
        <strain>168 / 1A1</strain>
    </source>
</reference>
<reference key="6">
    <citation type="journal article" date="2004" name="J. Biotechnol.">
        <title>Substrate specificity of native and mutated cytochrome P450 (CYP102A3) from Bacillus subtilis.</title>
        <authorList>
            <person name="Lentz O."/>
            <person name="Urlacher V."/>
            <person name="Schmid R.D."/>
        </authorList>
    </citation>
    <scope>FUNCTION</scope>
    <scope>CATALYTIC ACTIVITY</scope>
    <scope>SUBSTRATE SPECIFICITY</scope>
    <scope>MUTAGENESIS OF PHE-89 AND SER-190</scope>
    <source>
        <strain>168 / ATCC 33234 / DSM 402 / NBRC 111470 / NCIMB 10106</strain>
    </source>
</reference>
<reference key="7">
    <citation type="journal article" date="2006" name="ChemBioChem">
        <title>Altering the regioselectivity of cytochrome P450 CYP102A3 of Bacillus subtilis by using a new versatile assay system.</title>
        <authorList>
            <person name="Lentz O."/>
            <person name="Feenstra A."/>
            <person name="Habicher T."/>
            <person name="Hauer B."/>
            <person name="Schmid R.D."/>
            <person name="Urlacher V.B."/>
        </authorList>
    </citation>
    <scope>PROTEIN ENGINEERING</scope>
    <source>
        <strain>168 / ATCC 33234 / DSM 402 / NBRC 111470 / NCIMB 10106</strain>
    </source>
</reference>
<reference key="8">
    <citation type="journal article" date="2007" name="J. Bacteriol.">
        <title>SigM-responsive genes of Bacillus subtilis and their promoters.</title>
        <authorList>
            <person name="Jervis A.J."/>
            <person name="Thackray P.D."/>
            <person name="Houston C.W."/>
            <person name="Horsburgh M.J."/>
            <person name="Moir A."/>
        </authorList>
    </citation>
    <scope>INDUCTION</scope>
    <source>
        <strain>168 / 1604</strain>
    </source>
</reference>
<feature type="chain" id="PRO_0000052207" description="Bifunctional cytochrome P450/NADPH--P450 reductase 2">
    <location>
        <begin position="1"/>
        <end position="1054"/>
    </location>
</feature>
<feature type="domain" description="Flavodoxin-like" evidence="3">
    <location>
        <begin position="486"/>
        <end position="625"/>
    </location>
</feature>
<feature type="domain" description="FAD-binding FR-type" evidence="4">
    <location>
        <begin position="663"/>
        <end position="896"/>
    </location>
</feature>
<feature type="region of interest" description="Cytochrome P450" evidence="14">
    <location>
        <begin position="1"/>
        <end position="475"/>
    </location>
</feature>
<feature type="region of interest" description="Disordered" evidence="5">
    <location>
        <begin position="462"/>
        <end position="482"/>
    </location>
</feature>
<feature type="region of interest" description="NADPH--P450 reductase" evidence="14">
    <location>
        <begin position="476"/>
        <end position="1053"/>
    </location>
</feature>
<feature type="compositionally biased region" description="Basic and acidic residues" evidence="5">
    <location>
        <begin position="462"/>
        <end position="480"/>
    </location>
</feature>
<feature type="binding site" description="axial binding residue" evidence="2">
    <location>
        <position position="403"/>
    </location>
    <ligand>
        <name>heme</name>
        <dbReference type="ChEBI" id="CHEBI:30413"/>
    </ligand>
    <ligandPart>
        <name>Fe</name>
        <dbReference type="ChEBI" id="CHEBI:18248"/>
    </ligandPart>
</feature>
<feature type="binding site" evidence="2">
    <location>
        <begin position="492"/>
        <end position="497"/>
    </location>
    <ligand>
        <name>FMN</name>
        <dbReference type="ChEBI" id="CHEBI:58210"/>
    </ligand>
</feature>
<feature type="binding site" evidence="2">
    <location>
        <begin position="539"/>
        <end position="542"/>
    </location>
    <ligand>
        <name>FMN</name>
        <dbReference type="ChEBI" id="CHEBI:58210"/>
    </ligand>
</feature>
<feature type="binding site" evidence="2">
    <location>
        <begin position="573"/>
        <end position="575"/>
    </location>
    <ligand>
        <name>FMN</name>
        <dbReference type="ChEBI" id="CHEBI:58210"/>
    </ligand>
</feature>
<feature type="binding site" evidence="2">
    <location>
        <begin position="581"/>
        <end position="583"/>
    </location>
    <ligand>
        <name>FMN</name>
        <dbReference type="ChEBI" id="CHEBI:58210"/>
    </ligand>
</feature>
<feature type="site" description="Important for catalytic activity" evidence="2">
    <location>
        <position position="271"/>
    </location>
</feature>
<feature type="mutagenesis site" description="Hydroxylates shorter substrates with higher conversion rates than wild-type, and in contrast to wild-type, is also able to convert medium-chain alkanes and aromatic compounds; when associated with Q-190." evidence="8">
    <original>F</original>
    <variation>V</variation>
    <location>
        <position position="89"/>
    </location>
</feature>
<feature type="mutagenesis site" description="Hydroxylates shorter substrates with higher conversion rates than wild-type, and in contrast to wild-type, is also able to convert medium-chain alkanes and aromatic compounds; when associated with V-89." evidence="8">
    <original>S</original>
    <variation>Q</variation>
    <location>
        <position position="190"/>
    </location>
</feature>
<dbReference type="EC" id="1.14.14.1" evidence="8 9"/>
<dbReference type="EC" id="1.6.2.4" evidence="8 9"/>
<dbReference type="EMBL" id="U93874">
    <property type="protein sequence ID" value="AAB80867.1"/>
    <property type="molecule type" value="Genomic_DNA"/>
</dbReference>
<dbReference type="EMBL" id="AL009126">
    <property type="protein sequence ID" value="CAB14658.1"/>
    <property type="molecule type" value="Genomic_DNA"/>
</dbReference>
<dbReference type="PIR" id="A69975">
    <property type="entry name" value="A69975"/>
</dbReference>
<dbReference type="RefSeq" id="NP_390594.1">
    <property type="nucleotide sequence ID" value="NC_000964.3"/>
</dbReference>
<dbReference type="RefSeq" id="WP_003246174.1">
    <property type="nucleotide sequence ID" value="NZ_OZ025638.1"/>
</dbReference>
<dbReference type="SMR" id="O08336"/>
<dbReference type="FunCoup" id="O08336">
    <property type="interactions" value="450"/>
</dbReference>
<dbReference type="STRING" id="224308.BSU27160"/>
<dbReference type="PaxDb" id="224308-BSU27160"/>
<dbReference type="DNASU" id="937585"/>
<dbReference type="EnsemblBacteria" id="CAB14658">
    <property type="protein sequence ID" value="CAB14658"/>
    <property type="gene ID" value="BSU_27160"/>
</dbReference>
<dbReference type="GeneID" id="937585"/>
<dbReference type="KEGG" id="bsu:BSU27160"/>
<dbReference type="PATRIC" id="fig|224308.179.peg.2949"/>
<dbReference type="eggNOG" id="COG0369">
    <property type="taxonomic scope" value="Bacteria"/>
</dbReference>
<dbReference type="eggNOG" id="COG2124">
    <property type="taxonomic scope" value="Bacteria"/>
</dbReference>
<dbReference type="InParanoid" id="O08336"/>
<dbReference type="OrthoDB" id="9789468at2"/>
<dbReference type="PhylomeDB" id="O08336"/>
<dbReference type="BioCyc" id="BSUB:BSU27160-MONOMER"/>
<dbReference type="SABIO-RK" id="O08336"/>
<dbReference type="Proteomes" id="UP000001570">
    <property type="component" value="Chromosome"/>
</dbReference>
<dbReference type="GO" id="GO:0005829">
    <property type="term" value="C:cytosol"/>
    <property type="evidence" value="ECO:0000318"/>
    <property type="project" value="GO_Central"/>
</dbReference>
<dbReference type="GO" id="GO:0070330">
    <property type="term" value="F:aromatase activity"/>
    <property type="evidence" value="ECO:0007669"/>
    <property type="project" value="InterPro"/>
</dbReference>
<dbReference type="GO" id="GO:0005504">
    <property type="term" value="F:fatty acid binding"/>
    <property type="evidence" value="ECO:0000314"/>
    <property type="project" value="UniProtKB"/>
</dbReference>
<dbReference type="GO" id="GO:0050660">
    <property type="term" value="F:flavin adenine dinucleotide binding"/>
    <property type="evidence" value="ECO:0000314"/>
    <property type="project" value="UniProtKB"/>
</dbReference>
<dbReference type="GO" id="GO:0010181">
    <property type="term" value="F:FMN binding"/>
    <property type="evidence" value="ECO:0000314"/>
    <property type="project" value="UniProtKB"/>
</dbReference>
<dbReference type="GO" id="GO:0020037">
    <property type="term" value="F:heme binding"/>
    <property type="evidence" value="ECO:0000314"/>
    <property type="project" value="UniProtKB"/>
</dbReference>
<dbReference type="GO" id="GO:0005506">
    <property type="term" value="F:iron ion binding"/>
    <property type="evidence" value="ECO:0000250"/>
    <property type="project" value="UniProtKB"/>
</dbReference>
<dbReference type="GO" id="GO:0003958">
    <property type="term" value="F:NADPH-hemoprotein reductase activity"/>
    <property type="evidence" value="ECO:0000314"/>
    <property type="project" value="UniProtKB"/>
</dbReference>
<dbReference type="GO" id="GO:0016491">
    <property type="term" value="F:oxidoreductase activity"/>
    <property type="evidence" value="ECO:0000318"/>
    <property type="project" value="GO_Central"/>
</dbReference>
<dbReference type="GO" id="GO:0016712">
    <property type="term" value="F:oxidoreductase activity, acting on paired donors, with incorporation or reduction of molecular oxygen, reduced flavin or flavoprotein as one donor, and incorporation of one atom of oxygen"/>
    <property type="evidence" value="ECO:0000314"/>
    <property type="project" value="UniProtKB"/>
</dbReference>
<dbReference type="GO" id="GO:0019395">
    <property type="term" value="P:fatty acid oxidation"/>
    <property type="evidence" value="ECO:0000314"/>
    <property type="project" value="UniProtKB"/>
</dbReference>
<dbReference type="CDD" id="cd06206">
    <property type="entry name" value="bifunctional_CYPOR"/>
    <property type="match status" value="1"/>
</dbReference>
<dbReference type="CDD" id="cd11068">
    <property type="entry name" value="CYP120A1"/>
    <property type="match status" value="1"/>
</dbReference>
<dbReference type="FunFam" id="1.10.630.10:FF:000040">
    <property type="entry name" value="Bifunctional cytochrome P450/NADPH--P450 reductase"/>
    <property type="match status" value="1"/>
</dbReference>
<dbReference type="FunFam" id="1.20.990.10:FF:000011">
    <property type="entry name" value="Bifunctional cytochrome P450/NADPH--P450 reductase"/>
    <property type="match status" value="1"/>
</dbReference>
<dbReference type="FunFam" id="3.40.50.80:FF:000031">
    <property type="entry name" value="Bifunctional cytochrome P450/NADPH--P450 reductase"/>
    <property type="match status" value="1"/>
</dbReference>
<dbReference type="Gene3D" id="3.40.50.360">
    <property type="match status" value="1"/>
</dbReference>
<dbReference type="Gene3D" id="1.10.630.10">
    <property type="entry name" value="Cytochrome P450"/>
    <property type="match status" value="1"/>
</dbReference>
<dbReference type="Gene3D" id="1.20.990.10">
    <property type="entry name" value="NADPH-cytochrome p450 Reductase, Chain A, domain 3"/>
    <property type="match status" value="1"/>
</dbReference>
<dbReference type="Gene3D" id="3.40.50.80">
    <property type="entry name" value="Nucleotide-binding domain of ferredoxin-NADP reductase (FNR) module"/>
    <property type="match status" value="1"/>
</dbReference>
<dbReference type="Gene3D" id="2.40.30.10">
    <property type="entry name" value="Translation factors"/>
    <property type="match status" value="1"/>
</dbReference>
<dbReference type="InterPro" id="IPR023206">
    <property type="entry name" value="Bifunctional_P450_P450_red"/>
</dbReference>
<dbReference type="InterPro" id="IPR003097">
    <property type="entry name" value="CysJ-like_FAD-binding"/>
</dbReference>
<dbReference type="InterPro" id="IPR001128">
    <property type="entry name" value="Cyt_P450"/>
</dbReference>
<dbReference type="InterPro" id="IPR017972">
    <property type="entry name" value="Cyt_P450_CS"/>
</dbReference>
<dbReference type="InterPro" id="IPR036396">
    <property type="entry name" value="Cyt_P450_sf"/>
</dbReference>
<dbReference type="InterPro" id="IPR017927">
    <property type="entry name" value="FAD-bd_FR_type"/>
</dbReference>
<dbReference type="InterPro" id="IPR001094">
    <property type="entry name" value="Flavdoxin-like"/>
</dbReference>
<dbReference type="InterPro" id="IPR008254">
    <property type="entry name" value="Flavodoxin/NO_synth"/>
</dbReference>
<dbReference type="InterPro" id="IPR001709">
    <property type="entry name" value="Flavoprot_Pyr_Nucl_cyt_Rdtase"/>
</dbReference>
<dbReference type="InterPro" id="IPR029039">
    <property type="entry name" value="Flavoprotein-like_sf"/>
</dbReference>
<dbReference type="InterPro" id="IPR039261">
    <property type="entry name" value="FNR_nucleotide-bd"/>
</dbReference>
<dbReference type="InterPro" id="IPR023173">
    <property type="entry name" value="NADPH_Cyt_P450_Rdtase_alpha"/>
</dbReference>
<dbReference type="InterPro" id="IPR001433">
    <property type="entry name" value="OxRdtase_FAD/NAD-bd"/>
</dbReference>
<dbReference type="InterPro" id="IPR017938">
    <property type="entry name" value="Riboflavin_synthase-like_b-brl"/>
</dbReference>
<dbReference type="PANTHER" id="PTHR19384:SF17">
    <property type="entry name" value="NADPH--CYTOCHROME P450 REDUCTASE"/>
    <property type="match status" value="1"/>
</dbReference>
<dbReference type="PANTHER" id="PTHR19384">
    <property type="entry name" value="NITRIC OXIDE SYNTHASE-RELATED"/>
    <property type="match status" value="1"/>
</dbReference>
<dbReference type="Pfam" id="PF00667">
    <property type="entry name" value="FAD_binding_1"/>
    <property type="match status" value="1"/>
</dbReference>
<dbReference type="Pfam" id="PF00258">
    <property type="entry name" value="Flavodoxin_1"/>
    <property type="match status" value="1"/>
</dbReference>
<dbReference type="Pfam" id="PF00175">
    <property type="entry name" value="NAD_binding_1"/>
    <property type="match status" value="1"/>
</dbReference>
<dbReference type="Pfam" id="PF00067">
    <property type="entry name" value="p450"/>
    <property type="match status" value="1"/>
</dbReference>
<dbReference type="PIRSF" id="PIRSF000209">
    <property type="entry name" value="Bifunctional_P450_P450R"/>
    <property type="match status" value="1"/>
</dbReference>
<dbReference type="PRINTS" id="PR00369">
    <property type="entry name" value="FLAVODOXIN"/>
</dbReference>
<dbReference type="PRINTS" id="PR00371">
    <property type="entry name" value="FPNCR"/>
</dbReference>
<dbReference type="SUPFAM" id="SSF48264">
    <property type="entry name" value="Cytochrome P450"/>
    <property type="match status" value="1"/>
</dbReference>
<dbReference type="SUPFAM" id="SSF52343">
    <property type="entry name" value="Ferredoxin reductase-like, C-terminal NADP-linked domain"/>
    <property type="match status" value="1"/>
</dbReference>
<dbReference type="SUPFAM" id="SSF52218">
    <property type="entry name" value="Flavoproteins"/>
    <property type="match status" value="1"/>
</dbReference>
<dbReference type="SUPFAM" id="SSF63380">
    <property type="entry name" value="Riboflavin synthase domain-like"/>
    <property type="match status" value="1"/>
</dbReference>
<dbReference type="PROSITE" id="PS00086">
    <property type="entry name" value="CYTOCHROME_P450"/>
    <property type="match status" value="1"/>
</dbReference>
<dbReference type="PROSITE" id="PS51384">
    <property type="entry name" value="FAD_FR"/>
    <property type="match status" value="1"/>
</dbReference>
<dbReference type="PROSITE" id="PS50902">
    <property type="entry name" value="FLAVODOXIN_LIKE"/>
    <property type="match status" value="1"/>
</dbReference>
<proteinExistence type="evidence at protein level"/>
<protein>
    <recommendedName>
        <fullName evidence="13">Bifunctional cytochrome P450/NADPH--P450 reductase 2</fullName>
    </recommendedName>
    <alternativeName>
        <fullName evidence="12">CYP102A3</fullName>
    </alternativeName>
    <alternativeName>
        <fullName evidence="13">Fatty acid hydroxylase CypB</fullName>
    </alternativeName>
    <alternativeName>
        <fullName evidence="13">Flavocytochrome P450 102A3</fullName>
    </alternativeName>
    <domain>
        <recommendedName>
            <fullName evidence="13">Cytochrome P450 102A3</fullName>
            <ecNumber evidence="8 9">1.14.14.1</ecNumber>
        </recommendedName>
    </domain>
    <domain>
        <recommendedName>
            <fullName>NADPH--cytochrome P450 reductase</fullName>
            <ecNumber evidence="8 9">1.6.2.4</ecNumber>
        </recommendedName>
    </domain>
</protein>